<comment type="function">
    <text>Guanine nucleotide-binding proteins (G proteins) are involved as modulators or transducers in various transmembrane signaling systems.</text>
</comment>
<comment type="subunit">
    <text>G proteins are composed of 3 units; alpha, beta and gamma. The alpha chain contains the guanine nucleotide binding site.</text>
</comment>
<comment type="similarity">
    <text evidence="4">Belongs to the G-alpha family.</text>
</comment>
<name>GPA8_CAEBR</name>
<proteinExistence type="inferred from homology"/>
<reference key="1">
    <citation type="journal article" date="2005" name="Mol. Genet. Genomics">
        <title>Functional constraint and divergence in the G protein family in Caenorhabditis elegans and Caenorhabditis briggsae.</title>
        <authorList>
            <person name="Jovelin R."/>
            <person name="Phillips P.C."/>
        </authorList>
    </citation>
    <scope>NUCLEOTIDE SEQUENCE [GENOMIC DNA]</scope>
    <source>
        <strain>AF16</strain>
    </source>
</reference>
<reference key="2">
    <citation type="journal article" date="2003" name="PLoS Biol.">
        <title>The genome sequence of Caenorhabditis briggsae: a platform for comparative genomics.</title>
        <authorList>
            <person name="Stein L.D."/>
            <person name="Bao Z."/>
            <person name="Blasiar D."/>
            <person name="Blumenthal T."/>
            <person name="Brent M.R."/>
            <person name="Chen N."/>
            <person name="Chinwalla A."/>
            <person name="Clarke L."/>
            <person name="Clee C."/>
            <person name="Coghlan A."/>
            <person name="Coulson A."/>
            <person name="D'Eustachio P."/>
            <person name="Fitch D.H.A."/>
            <person name="Fulton L.A."/>
            <person name="Fulton R.E."/>
            <person name="Griffiths-Jones S."/>
            <person name="Harris T.W."/>
            <person name="Hillier L.W."/>
            <person name="Kamath R."/>
            <person name="Kuwabara P.E."/>
            <person name="Mardis E.R."/>
            <person name="Marra M.A."/>
            <person name="Miner T.L."/>
            <person name="Minx P."/>
            <person name="Mullikin J.C."/>
            <person name="Plumb R.W."/>
            <person name="Rogers J."/>
            <person name="Schein J.E."/>
            <person name="Sohrmann M."/>
            <person name="Spieth J."/>
            <person name="Stajich J.E."/>
            <person name="Wei C."/>
            <person name="Willey D."/>
            <person name="Wilson R.K."/>
            <person name="Durbin R.M."/>
            <person name="Waterston R.H."/>
        </authorList>
    </citation>
    <scope>NUCLEOTIDE SEQUENCE [LARGE SCALE GENOMIC DNA]</scope>
    <source>
        <strain>AF16</strain>
    </source>
</reference>
<accession>Q61MC6</accession>
<accession>A8X758</accession>
<feature type="initiator methionine" description="Removed" evidence="2">
    <location>
        <position position="1"/>
    </location>
</feature>
<feature type="chain" id="PRO_0000203642" description="Guanine nucleotide-binding protein alpha-8 subunit">
    <location>
        <begin position="2"/>
        <end position="364"/>
    </location>
</feature>
<feature type="domain" description="G-alpha" evidence="3">
    <location>
        <begin position="38"/>
        <end position="364"/>
    </location>
</feature>
<feature type="region of interest" description="G1 motif" evidence="3">
    <location>
        <begin position="41"/>
        <end position="54"/>
    </location>
</feature>
<feature type="region of interest" description="G2 motif" evidence="3">
    <location>
        <begin position="184"/>
        <end position="192"/>
    </location>
</feature>
<feature type="region of interest" description="G3 motif" evidence="3">
    <location>
        <begin position="207"/>
        <end position="216"/>
    </location>
</feature>
<feature type="region of interest" description="G4 motif" evidence="3">
    <location>
        <begin position="276"/>
        <end position="283"/>
    </location>
</feature>
<feature type="region of interest" description="G5 motif" evidence="3">
    <location>
        <begin position="334"/>
        <end position="339"/>
    </location>
</feature>
<feature type="binding site" evidence="1">
    <location>
        <begin position="46"/>
        <end position="53"/>
    </location>
    <ligand>
        <name>GTP</name>
        <dbReference type="ChEBI" id="CHEBI:37565"/>
    </ligand>
</feature>
<feature type="binding site" evidence="1">
    <location>
        <position position="53"/>
    </location>
    <ligand>
        <name>Mg(2+)</name>
        <dbReference type="ChEBI" id="CHEBI:18420"/>
    </ligand>
</feature>
<feature type="binding site" evidence="1">
    <location>
        <begin position="186"/>
        <end position="192"/>
    </location>
    <ligand>
        <name>GTP</name>
        <dbReference type="ChEBI" id="CHEBI:37565"/>
    </ligand>
</feature>
<feature type="binding site" evidence="1">
    <location>
        <position position="192"/>
    </location>
    <ligand>
        <name>Mg(2+)</name>
        <dbReference type="ChEBI" id="CHEBI:18420"/>
    </ligand>
</feature>
<feature type="binding site" evidence="1">
    <location>
        <begin position="211"/>
        <end position="215"/>
    </location>
    <ligand>
        <name>GTP</name>
        <dbReference type="ChEBI" id="CHEBI:37565"/>
    </ligand>
</feature>
<feature type="binding site" evidence="1">
    <location>
        <begin position="280"/>
        <end position="283"/>
    </location>
    <ligand>
        <name>GTP</name>
        <dbReference type="ChEBI" id="CHEBI:37565"/>
    </ligand>
</feature>
<feature type="binding site" evidence="1">
    <location>
        <position position="336"/>
    </location>
    <ligand>
        <name>GTP</name>
        <dbReference type="ChEBI" id="CHEBI:37565"/>
    </ligand>
</feature>
<feature type="lipid moiety-binding region" description="N-myristoyl glycine" evidence="2">
    <location>
        <position position="2"/>
    </location>
</feature>
<feature type="lipid moiety-binding region" description="S-palmitoyl cysteine" evidence="2">
    <location>
        <position position="5"/>
    </location>
</feature>
<evidence type="ECO:0000250" key="1"/>
<evidence type="ECO:0000255" key="2"/>
<evidence type="ECO:0000255" key="3">
    <source>
        <dbReference type="PROSITE-ProRule" id="PRU01230"/>
    </source>
</evidence>
<evidence type="ECO:0000305" key="4"/>
<dbReference type="EMBL" id="AY634301">
    <property type="protein sequence ID" value="AAW02907.1"/>
    <property type="molecule type" value="Genomic_DNA"/>
</dbReference>
<dbReference type="EMBL" id="HE601197">
    <property type="protein sequence ID" value="CAP28469.1"/>
    <property type="molecule type" value="Genomic_DNA"/>
</dbReference>
<dbReference type="SMR" id="Q61MC6"/>
<dbReference type="FunCoup" id="Q61MC6">
    <property type="interactions" value="20"/>
</dbReference>
<dbReference type="STRING" id="6238.Q61MC6"/>
<dbReference type="EnsemblMetazoa" id="CBG08544.1">
    <property type="protein sequence ID" value="CBG08544.1"/>
    <property type="gene ID" value="WBGene00030312"/>
</dbReference>
<dbReference type="KEGG" id="cbr:CBG_08544"/>
<dbReference type="CTD" id="8578255"/>
<dbReference type="WormBase" id="CBG08544">
    <property type="protein sequence ID" value="CBP02126"/>
    <property type="gene ID" value="WBGene00030312"/>
    <property type="gene designation" value="Cbr-gpa-8"/>
</dbReference>
<dbReference type="eggNOG" id="KOG0082">
    <property type="taxonomic scope" value="Eukaryota"/>
</dbReference>
<dbReference type="HOGENOM" id="CLU_014184_6_0_1"/>
<dbReference type="InParanoid" id="Q61MC6"/>
<dbReference type="OMA" id="GRENKSY"/>
<dbReference type="Proteomes" id="UP000008549">
    <property type="component" value="Unassembled WGS sequence"/>
</dbReference>
<dbReference type="GO" id="GO:0005737">
    <property type="term" value="C:cytoplasm"/>
    <property type="evidence" value="ECO:0000318"/>
    <property type="project" value="GO_Central"/>
</dbReference>
<dbReference type="GO" id="GO:0005834">
    <property type="term" value="C:heterotrimeric G-protein complex"/>
    <property type="evidence" value="ECO:0000318"/>
    <property type="project" value="GO_Central"/>
</dbReference>
<dbReference type="GO" id="GO:0001664">
    <property type="term" value="F:G protein-coupled receptor binding"/>
    <property type="evidence" value="ECO:0000318"/>
    <property type="project" value="GO_Central"/>
</dbReference>
<dbReference type="GO" id="GO:0031683">
    <property type="term" value="F:G-protein beta/gamma-subunit complex binding"/>
    <property type="evidence" value="ECO:0000318"/>
    <property type="project" value="GO_Central"/>
</dbReference>
<dbReference type="GO" id="GO:0005525">
    <property type="term" value="F:GTP binding"/>
    <property type="evidence" value="ECO:0007669"/>
    <property type="project" value="UniProtKB-KW"/>
</dbReference>
<dbReference type="GO" id="GO:0003924">
    <property type="term" value="F:GTPase activity"/>
    <property type="evidence" value="ECO:0000318"/>
    <property type="project" value="GO_Central"/>
</dbReference>
<dbReference type="GO" id="GO:0046872">
    <property type="term" value="F:metal ion binding"/>
    <property type="evidence" value="ECO:0007669"/>
    <property type="project" value="UniProtKB-KW"/>
</dbReference>
<dbReference type="GO" id="GO:0007188">
    <property type="term" value="P:adenylate cyclase-modulating G protein-coupled receptor signaling pathway"/>
    <property type="evidence" value="ECO:0000318"/>
    <property type="project" value="GO_Central"/>
</dbReference>
<dbReference type="CDD" id="cd00066">
    <property type="entry name" value="G-alpha"/>
    <property type="match status" value="1"/>
</dbReference>
<dbReference type="FunFam" id="1.10.400.10:FF:000022">
    <property type="entry name" value="Guanine nucleotide-binding protein alpha-8 subunit"/>
    <property type="match status" value="1"/>
</dbReference>
<dbReference type="FunFam" id="3.40.50.300:FF:000051">
    <property type="entry name" value="Guanine nucleotide-binding protein subunit alpha"/>
    <property type="match status" value="1"/>
</dbReference>
<dbReference type="Gene3D" id="1.10.400.10">
    <property type="entry name" value="GI Alpha 1, domain 2-like"/>
    <property type="match status" value="1"/>
</dbReference>
<dbReference type="Gene3D" id="3.40.50.300">
    <property type="entry name" value="P-loop containing nucleotide triphosphate hydrolases"/>
    <property type="match status" value="1"/>
</dbReference>
<dbReference type="InterPro" id="IPR001019">
    <property type="entry name" value="Gprotein_alpha_su"/>
</dbReference>
<dbReference type="InterPro" id="IPR011025">
    <property type="entry name" value="GproteinA_insert"/>
</dbReference>
<dbReference type="InterPro" id="IPR027417">
    <property type="entry name" value="P-loop_NTPase"/>
</dbReference>
<dbReference type="PANTHER" id="PTHR10218">
    <property type="entry name" value="GTP-BINDING PROTEIN ALPHA SUBUNIT"/>
    <property type="match status" value="1"/>
</dbReference>
<dbReference type="PANTHER" id="PTHR10218:SF196">
    <property type="entry name" value="GUANINE NUCLEOTIDE-BINDING PROTEIN ALPHA-8 SUBUNIT"/>
    <property type="match status" value="1"/>
</dbReference>
<dbReference type="Pfam" id="PF00503">
    <property type="entry name" value="G-alpha"/>
    <property type="match status" value="1"/>
</dbReference>
<dbReference type="PRINTS" id="PR00318">
    <property type="entry name" value="GPROTEINA"/>
</dbReference>
<dbReference type="SMART" id="SM00275">
    <property type="entry name" value="G_alpha"/>
    <property type="match status" value="1"/>
</dbReference>
<dbReference type="SUPFAM" id="SSF52540">
    <property type="entry name" value="P-loop containing nucleoside triphosphate hydrolases"/>
    <property type="match status" value="1"/>
</dbReference>
<dbReference type="SUPFAM" id="SSF47895">
    <property type="entry name" value="Transducin (alpha subunit), insertion domain"/>
    <property type="match status" value="1"/>
</dbReference>
<dbReference type="PROSITE" id="PS51882">
    <property type="entry name" value="G_ALPHA"/>
    <property type="match status" value="1"/>
</dbReference>
<keyword id="KW-0342">GTP-binding</keyword>
<keyword id="KW-0449">Lipoprotein</keyword>
<keyword id="KW-0460">Magnesium</keyword>
<keyword id="KW-0479">Metal-binding</keyword>
<keyword id="KW-0519">Myristate</keyword>
<keyword id="KW-0547">Nucleotide-binding</keyword>
<keyword id="KW-0564">Palmitate</keyword>
<keyword id="KW-1185">Reference proteome</keyword>
<keyword id="KW-0807">Transducer</keyword>
<sequence>MGALCSSETYMLDKETYKKQVEHNKMIEQDLDKDRKLKILKLLILGPGESGKSTTIKQIKIIHDEGYSVEEKLIRRHGIFMNILEGIEEIHLAVGRENKSYKNPLSFDHIHEVRMFTENFKKADEADKILGAEVINAIQKYVKDETVAMMLRDKTVYNIDDSTIYFLDNFSRIIQKDYLPTEEDILKSRVPTSGVIQYKIMLKNFNFKIFDVGGQRAQRRKWLHVFDDVHAVLFITSLSEYDQVLREDATVNRMKESLNLFEKICNGRYFINTAMILFLNKIDLFEIKIKHTNITVALTSYKGPQERDSALDYIRKRFVSLNKNKKRSIYEHVTCATDTEQIQVVIDSVIDVVIQHTMQKVGIQ</sequence>
<organism>
    <name type="scientific">Caenorhabditis briggsae</name>
    <dbReference type="NCBI Taxonomy" id="6238"/>
    <lineage>
        <taxon>Eukaryota</taxon>
        <taxon>Metazoa</taxon>
        <taxon>Ecdysozoa</taxon>
        <taxon>Nematoda</taxon>
        <taxon>Chromadorea</taxon>
        <taxon>Rhabditida</taxon>
        <taxon>Rhabditina</taxon>
        <taxon>Rhabditomorpha</taxon>
        <taxon>Rhabditoidea</taxon>
        <taxon>Rhabditidae</taxon>
        <taxon>Peloderinae</taxon>
        <taxon>Caenorhabditis</taxon>
    </lineage>
</organism>
<protein>
    <recommendedName>
        <fullName>Guanine nucleotide-binding protein alpha-8 subunit</fullName>
    </recommendedName>
</protein>
<gene>
    <name type="primary">gpa-8</name>
    <name type="ORF">CBG08544</name>
</gene>